<organism>
    <name type="scientific">Lake Victoria marburgvirus (strain Angola/2005)</name>
    <name type="common">MARV</name>
    <dbReference type="NCBI Taxonomy" id="378830"/>
    <lineage>
        <taxon>Viruses</taxon>
        <taxon>Riboviria</taxon>
        <taxon>Orthornavirae</taxon>
        <taxon>Negarnaviricota</taxon>
        <taxon>Haploviricotina</taxon>
        <taxon>Monjiviricetes</taxon>
        <taxon>Mononegavirales</taxon>
        <taxon>Filoviridae</taxon>
        <taxon>Orthomarburgvirus</taxon>
        <taxon>Orthomarburgvirus marburgense</taxon>
    </lineage>
</organism>
<accession>Q1PD56</accession>
<name>VP30_MABVA</name>
<keyword id="KW-1035">Host cytoplasm</keyword>
<keyword id="KW-0479">Metal-binding</keyword>
<keyword id="KW-0597">Phosphoprotein</keyword>
<keyword id="KW-0804">Transcription</keyword>
<keyword id="KW-0543">Viral nucleoprotein</keyword>
<keyword id="KW-0946">Virion</keyword>
<keyword id="KW-0862">Zinc</keyword>
<keyword id="KW-0863">Zinc-finger</keyword>
<reference key="1">
    <citation type="journal article" date="2006" name="J. Virol.">
        <title>Marburgvirus genomics and association with a large hemorrhagic fever outbreak in Angola.</title>
        <authorList>
            <person name="Towner J.S."/>
            <person name="Khristova M.L."/>
            <person name="Sealy T.K."/>
            <person name="Vincent M.J."/>
            <person name="Erickson B.R."/>
            <person name="Bawiec D.A."/>
            <person name="Hartman A.L."/>
            <person name="Comer J.A."/>
            <person name="Zaki S.R."/>
            <person name="Stroeher U."/>
            <person name="Gomes da Silva F."/>
            <person name="del Castillo F."/>
            <person name="Rollin P.E."/>
            <person name="Ksiazek T.G."/>
            <person name="Nichol S.T."/>
        </authorList>
    </citation>
    <scope>NUCLEOTIDE SEQUENCE [GENOMIC RNA]</scope>
    <source>
        <strain>Isolate Ang0126</strain>
        <strain>Isolate Ang0214</strain>
        <strain>Isolate Ang0215</strain>
        <strain>Isolate Ang0754</strain>
        <strain>Isolate Ang1379c</strain>
        <strain>Isolate Ang1381</strain>
        <strain>Isolate Ang1386</strain>
    </source>
</reference>
<proteinExistence type="inferred from homology"/>
<evidence type="ECO:0000250" key="1"/>
<evidence type="ECO:0000250" key="2">
    <source>
        <dbReference type="UniProtKB" id="Q05323"/>
    </source>
</evidence>
<evidence type="ECO:0000256" key="3">
    <source>
        <dbReference type="SAM" id="MobiDB-lite"/>
    </source>
</evidence>
<evidence type="ECO:0000305" key="4"/>
<organismHost>
    <name type="scientific">Chlorocebus aethiops</name>
    <name type="common">Green monkey</name>
    <name type="synonym">Cercopithecus aethiops</name>
    <dbReference type="NCBI Taxonomy" id="9534"/>
</organismHost>
<organismHost>
    <name type="scientific">Homo sapiens</name>
    <name type="common">Human</name>
    <dbReference type="NCBI Taxonomy" id="9606"/>
</organismHost>
<organismHost>
    <name type="scientific">Rousettus aegyptiacus</name>
    <name type="common">Egyptian fruit bat</name>
    <name type="synonym">Pteropus aegyptiacus</name>
    <dbReference type="NCBI Taxonomy" id="9407"/>
</organismHost>
<protein>
    <recommendedName>
        <fullName evidence="2">Transcriptional activator VP30</fullName>
    </recommendedName>
    <alternativeName>
        <fullName>Minor nucleoprotein VP30</fullName>
    </alternativeName>
</protein>
<comment type="function">
    <text evidence="1">Acts as a transcription anti-termination factor immediately after transcription initiation, but does not affect transcription elongation. This function has been found to be dependent on the formation of an RNA secondary structure at the transcription start site of the first gene (By similarity).</text>
</comment>
<comment type="subunit">
    <text evidence="1">Homooligomer.</text>
</comment>
<comment type="subcellular location">
    <subcellularLocation>
        <location>Virion</location>
    </subcellularLocation>
    <subcellularLocation>
        <location evidence="1">Host cytoplasm</location>
    </subcellularLocation>
    <text>Tightly bound in the nucleocapsid.</text>
</comment>
<comment type="PTM">
    <text evidence="1">Phosphorylated by host. Phosphorylation negatively regulates the transcription activation (By similarity).</text>
</comment>
<comment type="similarity">
    <text evidence="4">Belongs to the filoviridae transcriptional activator VP30 family.</text>
</comment>
<dbReference type="EMBL" id="DQ447653">
    <property type="protein sequence ID" value="ABE27016.1"/>
    <property type="molecule type" value="Genomic_RNA"/>
</dbReference>
<dbReference type="EMBL" id="DQ447654">
    <property type="protein sequence ID" value="ABE27023.1"/>
    <property type="molecule type" value="Genomic_RNA"/>
</dbReference>
<dbReference type="EMBL" id="DQ447655">
    <property type="protein sequence ID" value="ABE27030.1"/>
    <property type="molecule type" value="Genomic_RNA"/>
</dbReference>
<dbReference type="EMBL" id="DQ447656">
    <property type="protein sequence ID" value="ABE27037.1"/>
    <property type="molecule type" value="Genomic_RNA"/>
</dbReference>
<dbReference type="EMBL" id="DQ447657">
    <property type="protein sequence ID" value="ABE27044.1"/>
    <property type="molecule type" value="Genomic_RNA"/>
</dbReference>
<dbReference type="EMBL" id="DQ447658">
    <property type="protein sequence ID" value="ABE27051.1"/>
    <property type="molecule type" value="Genomic_RNA"/>
</dbReference>
<dbReference type="EMBL" id="DQ447659">
    <property type="protein sequence ID" value="ABE27058.1"/>
    <property type="molecule type" value="Genomic_RNA"/>
</dbReference>
<dbReference type="SMR" id="Q1PD56"/>
<dbReference type="Proteomes" id="UP000008242">
    <property type="component" value="Genome"/>
</dbReference>
<dbReference type="Proteomes" id="UP000097432">
    <property type="component" value="Genome"/>
</dbReference>
<dbReference type="Proteomes" id="UP000102513">
    <property type="component" value="Genome"/>
</dbReference>
<dbReference type="Proteomes" id="UP000115353">
    <property type="component" value="Genome"/>
</dbReference>
<dbReference type="Proteomes" id="UP000130744">
    <property type="component" value="Genome"/>
</dbReference>
<dbReference type="Proteomes" id="UP000168007">
    <property type="component" value="Genome"/>
</dbReference>
<dbReference type="Proteomes" id="UP000171838">
    <property type="component" value="Genome"/>
</dbReference>
<dbReference type="GO" id="GO:0030430">
    <property type="term" value="C:host cell cytoplasm"/>
    <property type="evidence" value="ECO:0007669"/>
    <property type="project" value="UniProtKB-SubCell"/>
</dbReference>
<dbReference type="GO" id="GO:0019013">
    <property type="term" value="C:viral nucleocapsid"/>
    <property type="evidence" value="ECO:0007669"/>
    <property type="project" value="UniProtKB-KW"/>
</dbReference>
<dbReference type="GO" id="GO:0003723">
    <property type="term" value="F:RNA binding"/>
    <property type="evidence" value="ECO:0007669"/>
    <property type="project" value="InterPro"/>
</dbReference>
<dbReference type="GO" id="GO:0008270">
    <property type="term" value="F:zinc ion binding"/>
    <property type="evidence" value="ECO:0007669"/>
    <property type="project" value="UniProtKB-KW"/>
</dbReference>
<dbReference type="FunFam" id="1.20.120.1160:FF:000001">
    <property type="entry name" value="Minor nucleoprotein VP30"/>
    <property type="match status" value="1"/>
</dbReference>
<dbReference type="Gene3D" id="1.20.120.1160">
    <property type="match status" value="1"/>
</dbReference>
<dbReference type="InterPro" id="IPR014459">
    <property type="entry name" value="VP30_FiloV"/>
</dbReference>
<dbReference type="Pfam" id="PF11507">
    <property type="entry name" value="Transcript_VP30"/>
    <property type="match status" value="1"/>
</dbReference>
<dbReference type="PIRSF" id="PIRSF011356">
    <property type="entry name" value="VP30_FiloV"/>
    <property type="match status" value="1"/>
</dbReference>
<sequence>MQQPRGRSRTRNHQATPSIYHETQLPSKPHYTNHHPRARSMSSTRSSAESSPTNHIPRARPPSTFNLSKPPPPPKDMCRNMKIGLPCTDPTCNRDHDLDNLTNRELLLLMARKMLPNTDKTFRSPQDCGSPSLSKGLSKDKQEQTKDVLTLENLGHILSYLHRSEIGKLDETSLRAALSLTCAGIRKTNRSLINTMTELHINHENLPQDQNGVIKQTYTGIHLDKGGQFEAALWQGWDKRSISLFVQAALYVMNNIPCESSISVQASYDHFILPQSQGKGQ</sequence>
<feature type="chain" id="PRO_0000314992" description="Transcriptional activator VP30">
    <location>
        <begin position="1"/>
        <end position="281"/>
    </location>
</feature>
<feature type="zinc finger region" description="C3H1-type; atypical" evidence="1">
    <location>
        <begin position="78"/>
        <end position="96"/>
    </location>
</feature>
<feature type="region of interest" description="Disordered" evidence="3">
    <location>
        <begin position="1"/>
        <end position="77"/>
    </location>
</feature>
<feature type="region of interest" description="Disordered" evidence="3">
    <location>
        <begin position="118"/>
        <end position="144"/>
    </location>
</feature>
<feature type="compositionally biased region" description="Basic residues" evidence="3">
    <location>
        <begin position="1"/>
        <end position="12"/>
    </location>
</feature>
<feature type="compositionally biased region" description="Low complexity" evidence="3">
    <location>
        <begin position="39"/>
        <end position="51"/>
    </location>
</feature>
<feature type="compositionally biased region" description="Polar residues" evidence="3">
    <location>
        <begin position="123"/>
        <end position="135"/>
    </location>
</feature>
<gene>
    <name type="primary">VP30</name>
</gene>